<sequence length="286" mass="31606">MASLRDIKAKINSTKKTSQITKAMEMVSASKLNRAEQNAKSFVPYMEKIQEVVASIAQGSKGINHPMLNARPVKRTGYIVITSDRGLAGGYNSNVLRTVSNVIRERHNMDSNQYSIIVLGRLGRDYLKRRGFNIIDEVVGLSDHPSFTDIKDLASRAIAMFADGAYDELYIYYNHYVSKISQEVTENKILPLTDVASDKPTTAYEFEPSEEEILKVLLPQYAESLVYGALLDGKASEHAARMTAMKSATDNAMEVIDSLTLSFNRARQAAITQEITEIVGGAAALE</sequence>
<accession>C3P1F5</accession>
<comment type="function">
    <text evidence="1">Produces ATP from ADP in the presence of a proton gradient across the membrane. The gamma chain is believed to be important in regulating ATPase activity and the flow of protons through the CF(0) complex.</text>
</comment>
<comment type="subunit">
    <text evidence="1">F-type ATPases have 2 components, CF(1) - the catalytic core - and CF(0) - the membrane proton channel. CF(1) has five subunits: alpha(3), beta(3), gamma(1), delta(1), epsilon(1). CF(0) has three main subunits: a, b and c.</text>
</comment>
<comment type="subcellular location">
    <subcellularLocation>
        <location evidence="1">Cell membrane</location>
        <topology evidence="1">Peripheral membrane protein</topology>
    </subcellularLocation>
</comment>
<comment type="similarity">
    <text evidence="1">Belongs to the ATPase gamma chain family.</text>
</comment>
<keyword id="KW-0066">ATP synthesis</keyword>
<keyword id="KW-1003">Cell membrane</keyword>
<keyword id="KW-0139">CF(1)</keyword>
<keyword id="KW-0375">Hydrogen ion transport</keyword>
<keyword id="KW-0406">Ion transport</keyword>
<keyword id="KW-0472">Membrane</keyword>
<keyword id="KW-0813">Transport</keyword>
<name>ATPG_BACAA</name>
<proteinExistence type="inferred from homology"/>
<dbReference type="EMBL" id="CP001598">
    <property type="protein sequence ID" value="ACQ48902.1"/>
    <property type="molecule type" value="Genomic_DNA"/>
</dbReference>
<dbReference type="RefSeq" id="WP_000157696.1">
    <property type="nucleotide sequence ID" value="NC_012659.1"/>
</dbReference>
<dbReference type="SMR" id="C3P1F5"/>
<dbReference type="GeneID" id="93005817"/>
<dbReference type="KEGG" id="bai:BAA_5576"/>
<dbReference type="HOGENOM" id="CLU_050669_0_1_9"/>
<dbReference type="GO" id="GO:0005886">
    <property type="term" value="C:plasma membrane"/>
    <property type="evidence" value="ECO:0007669"/>
    <property type="project" value="UniProtKB-SubCell"/>
</dbReference>
<dbReference type="GO" id="GO:0045259">
    <property type="term" value="C:proton-transporting ATP synthase complex"/>
    <property type="evidence" value="ECO:0007669"/>
    <property type="project" value="UniProtKB-KW"/>
</dbReference>
<dbReference type="GO" id="GO:0005524">
    <property type="term" value="F:ATP binding"/>
    <property type="evidence" value="ECO:0007669"/>
    <property type="project" value="UniProtKB-UniRule"/>
</dbReference>
<dbReference type="GO" id="GO:0046933">
    <property type="term" value="F:proton-transporting ATP synthase activity, rotational mechanism"/>
    <property type="evidence" value="ECO:0007669"/>
    <property type="project" value="UniProtKB-UniRule"/>
</dbReference>
<dbReference type="GO" id="GO:0042777">
    <property type="term" value="P:proton motive force-driven plasma membrane ATP synthesis"/>
    <property type="evidence" value="ECO:0007669"/>
    <property type="project" value="UniProtKB-UniRule"/>
</dbReference>
<dbReference type="CDD" id="cd12151">
    <property type="entry name" value="F1-ATPase_gamma"/>
    <property type="match status" value="1"/>
</dbReference>
<dbReference type="FunFam" id="3.40.1380.10:FF:000002">
    <property type="entry name" value="ATP synthase gamma chain"/>
    <property type="match status" value="1"/>
</dbReference>
<dbReference type="Gene3D" id="3.40.1380.10">
    <property type="match status" value="1"/>
</dbReference>
<dbReference type="Gene3D" id="1.10.287.80">
    <property type="entry name" value="ATP synthase, gamma subunit, helix hairpin domain"/>
    <property type="match status" value="1"/>
</dbReference>
<dbReference type="HAMAP" id="MF_00815">
    <property type="entry name" value="ATP_synth_gamma_bact"/>
    <property type="match status" value="1"/>
</dbReference>
<dbReference type="InterPro" id="IPR035968">
    <property type="entry name" value="ATP_synth_F1_ATPase_gsu"/>
</dbReference>
<dbReference type="InterPro" id="IPR000131">
    <property type="entry name" value="ATP_synth_F1_gsu"/>
</dbReference>
<dbReference type="InterPro" id="IPR023632">
    <property type="entry name" value="ATP_synth_F1_gsu_CS"/>
</dbReference>
<dbReference type="NCBIfam" id="TIGR01146">
    <property type="entry name" value="ATPsyn_F1gamma"/>
    <property type="match status" value="1"/>
</dbReference>
<dbReference type="PANTHER" id="PTHR11693">
    <property type="entry name" value="ATP SYNTHASE GAMMA CHAIN"/>
    <property type="match status" value="1"/>
</dbReference>
<dbReference type="PANTHER" id="PTHR11693:SF22">
    <property type="entry name" value="ATP SYNTHASE SUBUNIT GAMMA, MITOCHONDRIAL"/>
    <property type="match status" value="1"/>
</dbReference>
<dbReference type="Pfam" id="PF00231">
    <property type="entry name" value="ATP-synt"/>
    <property type="match status" value="1"/>
</dbReference>
<dbReference type="PRINTS" id="PR00126">
    <property type="entry name" value="ATPASEGAMMA"/>
</dbReference>
<dbReference type="SUPFAM" id="SSF52943">
    <property type="entry name" value="ATP synthase (F1-ATPase), gamma subunit"/>
    <property type="match status" value="1"/>
</dbReference>
<dbReference type="PROSITE" id="PS00153">
    <property type="entry name" value="ATPASE_GAMMA"/>
    <property type="match status" value="1"/>
</dbReference>
<gene>
    <name evidence="1" type="primary">atpG</name>
    <name type="ordered locus">BAA_5576</name>
</gene>
<organism>
    <name type="scientific">Bacillus anthracis (strain A0248)</name>
    <dbReference type="NCBI Taxonomy" id="592021"/>
    <lineage>
        <taxon>Bacteria</taxon>
        <taxon>Bacillati</taxon>
        <taxon>Bacillota</taxon>
        <taxon>Bacilli</taxon>
        <taxon>Bacillales</taxon>
        <taxon>Bacillaceae</taxon>
        <taxon>Bacillus</taxon>
        <taxon>Bacillus cereus group</taxon>
    </lineage>
</organism>
<evidence type="ECO:0000255" key="1">
    <source>
        <dbReference type="HAMAP-Rule" id="MF_00815"/>
    </source>
</evidence>
<protein>
    <recommendedName>
        <fullName evidence="1">ATP synthase gamma chain</fullName>
    </recommendedName>
    <alternativeName>
        <fullName evidence="1">ATP synthase F1 sector gamma subunit</fullName>
    </alternativeName>
    <alternativeName>
        <fullName evidence="1">F-ATPase gamma subunit</fullName>
    </alternativeName>
</protein>
<feature type="chain" id="PRO_1000148598" description="ATP synthase gamma chain">
    <location>
        <begin position="1"/>
        <end position="286"/>
    </location>
</feature>
<reference key="1">
    <citation type="submission" date="2009-04" db="EMBL/GenBank/DDBJ databases">
        <title>Genome sequence of Bacillus anthracis A0248.</title>
        <authorList>
            <person name="Dodson R.J."/>
            <person name="Munk A.C."/>
            <person name="Bruce D."/>
            <person name="Detter C."/>
            <person name="Tapia R."/>
            <person name="Sutton G."/>
            <person name="Sims D."/>
            <person name="Brettin T."/>
        </authorList>
    </citation>
    <scope>NUCLEOTIDE SEQUENCE [LARGE SCALE GENOMIC DNA]</scope>
    <source>
        <strain>A0248</strain>
    </source>
</reference>